<name>EFG_CAMHC</name>
<sequence length="691" mass="76880">MARKTPLHMVRNIGIAAHIDAGKTTTSERILFFTGISHKIGETHEGTATMDWMDQEKERGITITSAATTCFWRDHQINLIDTPGHVDFTIEVERSMRVLDGAVAVFCSVGGVQPQSETVWRQANKYHVPRIAFVNKMDRVGANFYNVEKQIKDRLKANPVPLQIPIGAEDNFKGVVDLIQMKALVWESDEPTNYVVKDIPADLQDKAKEYHDKLVEAVAETDEKLMEKFFDGVELSIDEIKKGIKTATLSLNIVPMLCGTAFKNKGVQPLLDAVVDYLPAPDEVPNIKGQYENGKEVSVESTDDGEFAALGFKIATDPFVGQLTFVRVYRGVLASGSYVYNAGKGKKERVGRILRMHSNKREEIKELYAGEIGAVVGLKDTLTGDTLASEKDPVILERMEFPDPVISVAVEPKTKADQEKMGIALQKLAQEDPSFRVATDEESGQTIISGMGELHLEIIVDRMLREFKVEAEVGKPQVAYRETIRKTVEQEYKYAKQSGGRGQYGHVFLRLEPMEPGGENYEFVNDIKGGAVPKEYIPAVDKGCQEAMQSGVLAGYPVVDIKVTLFDGSYHEVDSSEMAFKLAASMGFKEGARKANAVILEPMMKVEVETPEEYMGDVIGDLNKRRGQVNNMSDRGGNKIIDAFCPLAEMFGYSTDLRSQTQGRATYSMEFDHYDEVPRNVSEEIIKKRNG</sequence>
<keyword id="KW-0963">Cytoplasm</keyword>
<keyword id="KW-0251">Elongation factor</keyword>
<keyword id="KW-0342">GTP-binding</keyword>
<keyword id="KW-0547">Nucleotide-binding</keyword>
<keyword id="KW-0648">Protein biosynthesis</keyword>
<keyword id="KW-1185">Reference proteome</keyword>
<evidence type="ECO:0000255" key="1">
    <source>
        <dbReference type="HAMAP-Rule" id="MF_00054"/>
    </source>
</evidence>
<protein>
    <recommendedName>
        <fullName evidence="1">Elongation factor G</fullName>
        <shortName evidence="1">EF-G</shortName>
    </recommendedName>
</protein>
<dbReference type="EMBL" id="CP000776">
    <property type="protein sequence ID" value="ABS52345.1"/>
    <property type="molecule type" value="Genomic_DNA"/>
</dbReference>
<dbReference type="RefSeq" id="WP_012109483.1">
    <property type="nucleotide sequence ID" value="NC_009714.1"/>
</dbReference>
<dbReference type="SMR" id="A7I3T6"/>
<dbReference type="STRING" id="360107.CHAB381_1658"/>
<dbReference type="KEGG" id="cha:CHAB381_1658"/>
<dbReference type="eggNOG" id="COG0480">
    <property type="taxonomic scope" value="Bacteria"/>
</dbReference>
<dbReference type="HOGENOM" id="CLU_002794_4_1_7"/>
<dbReference type="OrthoDB" id="9804431at2"/>
<dbReference type="Proteomes" id="UP000002407">
    <property type="component" value="Chromosome"/>
</dbReference>
<dbReference type="GO" id="GO:0005737">
    <property type="term" value="C:cytoplasm"/>
    <property type="evidence" value="ECO:0007669"/>
    <property type="project" value="UniProtKB-SubCell"/>
</dbReference>
<dbReference type="GO" id="GO:0005525">
    <property type="term" value="F:GTP binding"/>
    <property type="evidence" value="ECO:0007669"/>
    <property type="project" value="UniProtKB-UniRule"/>
</dbReference>
<dbReference type="GO" id="GO:0003924">
    <property type="term" value="F:GTPase activity"/>
    <property type="evidence" value="ECO:0007669"/>
    <property type="project" value="InterPro"/>
</dbReference>
<dbReference type="GO" id="GO:0003746">
    <property type="term" value="F:translation elongation factor activity"/>
    <property type="evidence" value="ECO:0007669"/>
    <property type="project" value="UniProtKB-UniRule"/>
</dbReference>
<dbReference type="GO" id="GO:0032790">
    <property type="term" value="P:ribosome disassembly"/>
    <property type="evidence" value="ECO:0007669"/>
    <property type="project" value="TreeGrafter"/>
</dbReference>
<dbReference type="CDD" id="cd01886">
    <property type="entry name" value="EF-G"/>
    <property type="match status" value="1"/>
</dbReference>
<dbReference type="CDD" id="cd16262">
    <property type="entry name" value="EFG_III"/>
    <property type="match status" value="1"/>
</dbReference>
<dbReference type="CDD" id="cd01434">
    <property type="entry name" value="EFG_mtEFG1_IV"/>
    <property type="match status" value="1"/>
</dbReference>
<dbReference type="CDD" id="cd03713">
    <property type="entry name" value="EFG_mtEFG_C"/>
    <property type="match status" value="1"/>
</dbReference>
<dbReference type="CDD" id="cd04088">
    <property type="entry name" value="EFG_mtEFG_II"/>
    <property type="match status" value="1"/>
</dbReference>
<dbReference type="FunFam" id="2.40.30.10:FF:000006">
    <property type="entry name" value="Elongation factor G"/>
    <property type="match status" value="1"/>
</dbReference>
<dbReference type="FunFam" id="3.30.230.10:FF:000003">
    <property type="entry name" value="Elongation factor G"/>
    <property type="match status" value="1"/>
</dbReference>
<dbReference type="FunFam" id="3.30.70.240:FF:000001">
    <property type="entry name" value="Elongation factor G"/>
    <property type="match status" value="1"/>
</dbReference>
<dbReference type="FunFam" id="3.30.70.870:FF:000001">
    <property type="entry name" value="Elongation factor G"/>
    <property type="match status" value="1"/>
</dbReference>
<dbReference type="FunFam" id="3.40.50.300:FF:000029">
    <property type="entry name" value="Elongation factor G"/>
    <property type="match status" value="1"/>
</dbReference>
<dbReference type="Gene3D" id="3.30.230.10">
    <property type="match status" value="1"/>
</dbReference>
<dbReference type="Gene3D" id="3.30.70.240">
    <property type="match status" value="1"/>
</dbReference>
<dbReference type="Gene3D" id="3.30.70.870">
    <property type="entry name" value="Elongation Factor G (Translational Gtpase), domain 3"/>
    <property type="match status" value="1"/>
</dbReference>
<dbReference type="Gene3D" id="3.40.50.300">
    <property type="entry name" value="P-loop containing nucleotide triphosphate hydrolases"/>
    <property type="match status" value="1"/>
</dbReference>
<dbReference type="Gene3D" id="2.40.30.10">
    <property type="entry name" value="Translation factors"/>
    <property type="match status" value="1"/>
</dbReference>
<dbReference type="HAMAP" id="MF_00054_B">
    <property type="entry name" value="EF_G_EF_2_B"/>
    <property type="match status" value="1"/>
</dbReference>
<dbReference type="InterPro" id="IPR041095">
    <property type="entry name" value="EFG_II"/>
</dbReference>
<dbReference type="InterPro" id="IPR009022">
    <property type="entry name" value="EFG_III"/>
</dbReference>
<dbReference type="InterPro" id="IPR035647">
    <property type="entry name" value="EFG_III/V"/>
</dbReference>
<dbReference type="InterPro" id="IPR047872">
    <property type="entry name" value="EFG_IV"/>
</dbReference>
<dbReference type="InterPro" id="IPR035649">
    <property type="entry name" value="EFG_V"/>
</dbReference>
<dbReference type="InterPro" id="IPR000640">
    <property type="entry name" value="EFG_V-like"/>
</dbReference>
<dbReference type="InterPro" id="IPR004161">
    <property type="entry name" value="EFTu-like_2"/>
</dbReference>
<dbReference type="InterPro" id="IPR031157">
    <property type="entry name" value="G_TR_CS"/>
</dbReference>
<dbReference type="InterPro" id="IPR027417">
    <property type="entry name" value="P-loop_NTPase"/>
</dbReference>
<dbReference type="InterPro" id="IPR020568">
    <property type="entry name" value="Ribosomal_Su5_D2-typ_SF"/>
</dbReference>
<dbReference type="InterPro" id="IPR014721">
    <property type="entry name" value="Ribsml_uS5_D2-typ_fold_subgr"/>
</dbReference>
<dbReference type="InterPro" id="IPR005225">
    <property type="entry name" value="Small_GTP-bd"/>
</dbReference>
<dbReference type="InterPro" id="IPR000795">
    <property type="entry name" value="T_Tr_GTP-bd_dom"/>
</dbReference>
<dbReference type="InterPro" id="IPR009000">
    <property type="entry name" value="Transl_B-barrel_sf"/>
</dbReference>
<dbReference type="InterPro" id="IPR004540">
    <property type="entry name" value="Transl_elong_EFG/EF2"/>
</dbReference>
<dbReference type="InterPro" id="IPR005517">
    <property type="entry name" value="Transl_elong_EFG/EF2_IV"/>
</dbReference>
<dbReference type="NCBIfam" id="TIGR00484">
    <property type="entry name" value="EF-G"/>
    <property type="match status" value="1"/>
</dbReference>
<dbReference type="NCBIfam" id="NF009379">
    <property type="entry name" value="PRK12740.1-3"/>
    <property type="match status" value="1"/>
</dbReference>
<dbReference type="NCBIfam" id="NF009381">
    <property type="entry name" value="PRK12740.1-5"/>
    <property type="match status" value="1"/>
</dbReference>
<dbReference type="NCBIfam" id="TIGR00231">
    <property type="entry name" value="small_GTP"/>
    <property type="match status" value="1"/>
</dbReference>
<dbReference type="PANTHER" id="PTHR43261:SF1">
    <property type="entry name" value="RIBOSOME-RELEASING FACTOR 2, MITOCHONDRIAL"/>
    <property type="match status" value="1"/>
</dbReference>
<dbReference type="PANTHER" id="PTHR43261">
    <property type="entry name" value="TRANSLATION ELONGATION FACTOR G-RELATED"/>
    <property type="match status" value="1"/>
</dbReference>
<dbReference type="Pfam" id="PF00679">
    <property type="entry name" value="EFG_C"/>
    <property type="match status" value="1"/>
</dbReference>
<dbReference type="Pfam" id="PF14492">
    <property type="entry name" value="EFG_III"/>
    <property type="match status" value="1"/>
</dbReference>
<dbReference type="Pfam" id="PF03764">
    <property type="entry name" value="EFG_IV"/>
    <property type="match status" value="1"/>
</dbReference>
<dbReference type="Pfam" id="PF00009">
    <property type="entry name" value="GTP_EFTU"/>
    <property type="match status" value="1"/>
</dbReference>
<dbReference type="Pfam" id="PF03144">
    <property type="entry name" value="GTP_EFTU_D2"/>
    <property type="match status" value="1"/>
</dbReference>
<dbReference type="PRINTS" id="PR00315">
    <property type="entry name" value="ELONGATNFCT"/>
</dbReference>
<dbReference type="SMART" id="SM00838">
    <property type="entry name" value="EFG_C"/>
    <property type="match status" value="1"/>
</dbReference>
<dbReference type="SMART" id="SM00889">
    <property type="entry name" value="EFG_IV"/>
    <property type="match status" value="1"/>
</dbReference>
<dbReference type="SUPFAM" id="SSF54980">
    <property type="entry name" value="EF-G C-terminal domain-like"/>
    <property type="match status" value="2"/>
</dbReference>
<dbReference type="SUPFAM" id="SSF52540">
    <property type="entry name" value="P-loop containing nucleoside triphosphate hydrolases"/>
    <property type="match status" value="1"/>
</dbReference>
<dbReference type="SUPFAM" id="SSF54211">
    <property type="entry name" value="Ribosomal protein S5 domain 2-like"/>
    <property type="match status" value="1"/>
</dbReference>
<dbReference type="SUPFAM" id="SSF50447">
    <property type="entry name" value="Translation proteins"/>
    <property type="match status" value="1"/>
</dbReference>
<dbReference type="PROSITE" id="PS00301">
    <property type="entry name" value="G_TR_1"/>
    <property type="match status" value="1"/>
</dbReference>
<dbReference type="PROSITE" id="PS51722">
    <property type="entry name" value="G_TR_2"/>
    <property type="match status" value="1"/>
</dbReference>
<gene>
    <name evidence="1" type="primary">fusA</name>
    <name type="ordered locus">CHAB381_1658</name>
</gene>
<organism>
    <name type="scientific">Campylobacter hominis (strain ATCC BAA-381 / DSM 21671 / CCUG 45161 / LMG 19568 / NCTC 13146 / CH001A)</name>
    <dbReference type="NCBI Taxonomy" id="360107"/>
    <lineage>
        <taxon>Bacteria</taxon>
        <taxon>Pseudomonadati</taxon>
        <taxon>Campylobacterota</taxon>
        <taxon>Epsilonproteobacteria</taxon>
        <taxon>Campylobacterales</taxon>
        <taxon>Campylobacteraceae</taxon>
        <taxon>Campylobacter</taxon>
    </lineage>
</organism>
<proteinExistence type="inferred from homology"/>
<comment type="function">
    <text evidence="1">Catalyzes the GTP-dependent ribosomal translocation step during translation elongation. During this step, the ribosome changes from the pre-translocational (PRE) to the post-translocational (POST) state as the newly formed A-site-bound peptidyl-tRNA and P-site-bound deacylated tRNA move to the P and E sites, respectively. Catalyzes the coordinated movement of the two tRNA molecules, the mRNA and conformational changes in the ribosome.</text>
</comment>
<comment type="subcellular location">
    <subcellularLocation>
        <location evidence="1">Cytoplasm</location>
    </subcellularLocation>
</comment>
<comment type="similarity">
    <text evidence="1">Belongs to the TRAFAC class translation factor GTPase superfamily. Classic translation factor GTPase family. EF-G/EF-2 subfamily.</text>
</comment>
<accession>A7I3T6</accession>
<feature type="chain" id="PRO_1000008811" description="Elongation factor G">
    <location>
        <begin position="1"/>
        <end position="691"/>
    </location>
</feature>
<feature type="domain" description="tr-type G">
    <location>
        <begin position="8"/>
        <end position="282"/>
    </location>
</feature>
<feature type="binding site" evidence="1">
    <location>
        <begin position="17"/>
        <end position="24"/>
    </location>
    <ligand>
        <name>GTP</name>
        <dbReference type="ChEBI" id="CHEBI:37565"/>
    </ligand>
</feature>
<feature type="binding site" evidence="1">
    <location>
        <begin position="81"/>
        <end position="85"/>
    </location>
    <ligand>
        <name>GTP</name>
        <dbReference type="ChEBI" id="CHEBI:37565"/>
    </ligand>
</feature>
<feature type="binding site" evidence="1">
    <location>
        <begin position="135"/>
        <end position="138"/>
    </location>
    <ligand>
        <name>GTP</name>
        <dbReference type="ChEBI" id="CHEBI:37565"/>
    </ligand>
</feature>
<reference key="1">
    <citation type="submission" date="2007-07" db="EMBL/GenBank/DDBJ databases">
        <title>Complete genome sequence of Campylobacter hominis ATCC BAA-381, a commensal isolated from the human gastrointestinal tract.</title>
        <authorList>
            <person name="Fouts D.E."/>
            <person name="Mongodin E.F."/>
            <person name="Puiu D."/>
            <person name="Sebastian Y."/>
            <person name="Miller W.G."/>
            <person name="Mandrell R.E."/>
            <person name="Nelson K.E."/>
        </authorList>
    </citation>
    <scope>NUCLEOTIDE SEQUENCE [LARGE SCALE GENOMIC DNA]</scope>
    <source>
        <strain>ATCC BAA-381 / DSM 21671 / CCUG 45161 / LMG 19568 / NCTC 13146 / CH001A</strain>
    </source>
</reference>